<evidence type="ECO:0000255" key="1">
    <source>
        <dbReference type="HAMAP-Rule" id="MF_01302"/>
    </source>
</evidence>
<evidence type="ECO:0000305" key="2"/>
<sequence length="132" mass="14825">MTMTDPIADMLTRVRNANMVRHEKLELPASNIKKEIAEILKSEGFIKNVEYVEDDKQGVIRLFLKYGQNNERVITGLKRISKPGLRVYAKANEVPKVLNGLGIALVSTSEGVITDKEARKRNVGGEIIAYVW</sequence>
<name>RS8_STAEQ</name>
<feature type="chain" id="PRO_0000126490" description="Small ribosomal subunit protein uS8">
    <location>
        <begin position="1"/>
        <end position="132"/>
    </location>
</feature>
<dbReference type="EMBL" id="CP000029">
    <property type="protein sequence ID" value="AAW55141.1"/>
    <property type="molecule type" value="Genomic_DNA"/>
</dbReference>
<dbReference type="RefSeq" id="WP_001829768.1">
    <property type="nucleotide sequence ID" value="NC_002976.3"/>
</dbReference>
<dbReference type="SMR" id="Q5HM13"/>
<dbReference type="STRING" id="176279.SERP1817"/>
<dbReference type="GeneID" id="50018087"/>
<dbReference type="KEGG" id="ser:SERP1817"/>
<dbReference type="eggNOG" id="COG0096">
    <property type="taxonomic scope" value="Bacteria"/>
</dbReference>
<dbReference type="HOGENOM" id="CLU_098428_0_2_9"/>
<dbReference type="Proteomes" id="UP000000531">
    <property type="component" value="Chromosome"/>
</dbReference>
<dbReference type="GO" id="GO:1990904">
    <property type="term" value="C:ribonucleoprotein complex"/>
    <property type="evidence" value="ECO:0007669"/>
    <property type="project" value="UniProtKB-KW"/>
</dbReference>
<dbReference type="GO" id="GO:0005840">
    <property type="term" value="C:ribosome"/>
    <property type="evidence" value="ECO:0007669"/>
    <property type="project" value="UniProtKB-KW"/>
</dbReference>
<dbReference type="GO" id="GO:0019843">
    <property type="term" value="F:rRNA binding"/>
    <property type="evidence" value="ECO:0007669"/>
    <property type="project" value="UniProtKB-UniRule"/>
</dbReference>
<dbReference type="GO" id="GO:0003735">
    <property type="term" value="F:structural constituent of ribosome"/>
    <property type="evidence" value="ECO:0007669"/>
    <property type="project" value="InterPro"/>
</dbReference>
<dbReference type="GO" id="GO:0006412">
    <property type="term" value="P:translation"/>
    <property type="evidence" value="ECO:0007669"/>
    <property type="project" value="UniProtKB-UniRule"/>
</dbReference>
<dbReference type="FunFam" id="3.30.1370.30:FF:000002">
    <property type="entry name" value="30S ribosomal protein S8"/>
    <property type="match status" value="1"/>
</dbReference>
<dbReference type="FunFam" id="3.30.1490.10:FF:000001">
    <property type="entry name" value="30S ribosomal protein S8"/>
    <property type="match status" value="1"/>
</dbReference>
<dbReference type="Gene3D" id="3.30.1370.30">
    <property type="match status" value="1"/>
</dbReference>
<dbReference type="Gene3D" id="3.30.1490.10">
    <property type="match status" value="1"/>
</dbReference>
<dbReference type="HAMAP" id="MF_01302_B">
    <property type="entry name" value="Ribosomal_uS8_B"/>
    <property type="match status" value="1"/>
</dbReference>
<dbReference type="InterPro" id="IPR000630">
    <property type="entry name" value="Ribosomal_uS8"/>
</dbReference>
<dbReference type="InterPro" id="IPR047863">
    <property type="entry name" value="Ribosomal_uS8_CS"/>
</dbReference>
<dbReference type="InterPro" id="IPR035987">
    <property type="entry name" value="Ribosomal_uS8_sf"/>
</dbReference>
<dbReference type="NCBIfam" id="NF001109">
    <property type="entry name" value="PRK00136.1"/>
    <property type="match status" value="1"/>
</dbReference>
<dbReference type="PANTHER" id="PTHR11758">
    <property type="entry name" value="40S RIBOSOMAL PROTEIN S15A"/>
    <property type="match status" value="1"/>
</dbReference>
<dbReference type="Pfam" id="PF00410">
    <property type="entry name" value="Ribosomal_S8"/>
    <property type="match status" value="1"/>
</dbReference>
<dbReference type="SUPFAM" id="SSF56047">
    <property type="entry name" value="Ribosomal protein S8"/>
    <property type="match status" value="1"/>
</dbReference>
<dbReference type="PROSITE" id="PS00053">
    <property type="entry name" value="RIBOSOMAL_S8"/>
    <property type="match status" value="1"/>
</dbReference>
<comment type="function">
    <text evidence="1">One of the primary rRNA binding proteins, it binds directly to 16S rRNA central domain where it helps coordinate assembly of the platform of the 30S subunit.</text>
</comment>
<comment type="subunit">
    <text evidence="1">Part of the 30S ribosomal subunit. Contacts proteins S5 and S12.</text>
</comment>
<comment type="similarity">
    <text evidence="1">Belongs to the universal ribosomal protein uS8 family.</text>
</comment>
<organism>
    <name type="scientific">Staphylococcus epidermidis (strain ATCC 35984 / DSM 28319 / BCRC 17069 / CCUG 31568 / BM 3577 / RP62A)</name>
    <dbReference type="NCBI Taxonomy" id="176279"/>
    <lineage>
        <taxon>Bacteria</taxon>
        <taxon>Bacillati</taxon>
        <taxon>Bacillota</taxon>
        <taxon>Bacilli</taxon>
        <taxon>Bacillales</taxon>
        <taxon>Staphylococcaceae</taxon>
        <taxon>Staphylococcus</taxon>
    </lineage>
</organism>
<keyword id="KW-1185">Reference proteome</keyword>
<keyword id="KW-0687">Ribonucleoprotein</keyword>
<keyword id="KW-0689">Ribosomal protein</keyword>
<keyword id="KW-0694">RNA-binding</keyword>
<keyword id="KW-0699">rRNA-binding</keyword>
<accession>Q5HM13</accession>
<gene>
    <name evidence="1" type="primary">rpsH</name>
    <name type="ordered locus">SERP1817</name>
</gene>
<protein>
    <recommendedName>
        <fullName evidence="1">Small ribosomal subunit protein uS8</fullName>
    </recommendedName>
    <alternativeName>
        <fullName evidence="2">30S ribosomal protein S8</fullName>
    </alternativeName>
</protein>
<reference key="1">
    <citation type="journal article" date="2005" name="J. Bacteriol.">
        <title>Insights on evolution of virulence and resistance from the complete genome analysis of an early methicillin-resistant Staphylococcus aureus strain and a biofilm-producing methicillin-resistant Staphylococcus epidermidis strain.</title>
        <authorList>
            <person name="Gill S.R."/>
            <person name="Fouts D.E."/>
            <person name="Archer G.L."/>
            <person name="Mongodin E.F."/>
            <person name="DeBoy R.T."/>
            <person name="Ravel J."/>
            <person name="Paulsen I.T."/>
            <person name="Kolonay J.F."/>
            <person name="Brinkac L.M."/>
            <person name="Beanan M.J."/>
            <person name="Dodson R.J."/>
            <person name="Daugherty S.C."/>
            <person name="Madupu R."/>
            <person name="Angiuoli S.V."/>
            <person name="Durkin A.S."/>
            <person name="Haft D.H."/>
            <person name="Vamathevan J.J."/>
            <person name="Khouri H."/>
            <person name="Utterback T.R."/>
            <person name="Lee C."/>
            <person name="Dimitrov G."/>
            <person name="Jiang L."/>
            <person name="Qin H."/>
            <person name="Weidman J."/>
            <person name="Tran K."/>
            <person name="Kang K.H."/>
            <person name="Hance I.R."/>
            <person name="Nelson K.E."/>
            <person name="Fraser C.M."/>
        </authorList>
    </citation>
    <scope>NUCLEOTIDE SEQUENCE [LARGE SCALE GENOMIC DNA]</scope>
    <source>
        <strain>ATCC 35984 / DSM 28319 / BCRC 17069 / CCUG 31568 / BM 3577 / RP62A</strain>
    </source>
</reference>
<proteinExistence type="inferred from homology"/>